<proteinExistence type="inferred from homology"/>
<comment type="miscellaneous">
    <text>Confers resistance to cycloheximide, an inhibitor of polypeptide elongation.</text>
</comment>
<comment type="similarity">
    <text evidence="3">Belongs to the eukaryotic ribosomal protein eL42 family.</text>
</comment>
<feature type="initiator methionine" description="Removed" evidence="1">
    <location>
        <position position="1"/>
    </location>
</feature>
<feature type="chain" id="PRO_0000149141" description="Large ribosomal subunit protein eL42">
    <location>
        <begin position="2"/>
        <end position="106"/>
    </location>
</feature>
<feature type="region of interest" description="Disordered" evidence="2">
    <location>
        <begin position="36"/>
        <end position="56"/>
    </location>
</feature>
<accession>O59870</accession>
<evidence type="ECO:0000250" key="1"/>
<evidence type="ECO:0000256" key="2">
    <source>
        <dbReference type="SAM" id="MobiDB-lite"/>
    </source>
</evidence>
<evidence type="ECO:0000305" key="3"/>
<dbReference type="EMBL" id="AF004672">
    <property type="protein sequence ID" value="AAC39456.1"/>
    <property type="molecule type" value="Genomic_DNA"/>
</dbReference>
<dbReference type="SMR" id="O59870"/>
<dbReference type="GO" id="GO:1990904">
    <property type="term" value="C:ribonucleoprotein complex"/>
    <property type="evidence" value="ECO:0007669"/>
    <property type="project" value="UniProtKB-KW"/>
</dbReference>
<dbReference type="GO" id="GO:0005840">
    <property type="term" value="C:ribosome"/>
    <property type="evidence" value="ECO:0007669"/>
    <property type="project" value="UniProtKB-KW"/>
</dbReference>
<dbReference type="GO" id="GO:0003735">
    <property type="term" value="F:structural constituent of ribosome"/>
    <property type="evidence" value="ECO:0007669"/>
    <property type="project" value="InterPro"/>
</dbReference>
<dbReference type="GO" id="GO:0046677">
    <property type="term" value="P:response to antibiotic"/>
    <property type="evidence" value="ECO:0007669"/>
    <property type="project" value="UniProtKB-KW"/>
</dbReference>
<dbReference type="GO" id="GO:0046898">
    <property type="term" value="P:response to cycloheximide"/>
    <property type="evidence" value="ECO:0007669"/>
    <property type="project" value="UniProtKB-KW"/>
</dbReference>
<dbReference type="GO" id="GO:0006412">
    <property type="term" value="P:translation"/>
    <property type="evidence" value="ECO:0007669"/>
    <property type="project" value="InterPro"/>
</dbReference>
<dbReference type="FunFam" id="3.10.450.80:FF:000001">
    <property type="entry name" value="60S ribosomal protein L44"/>
    <property type="match status" value="1"/>
</dbReference>
<dbReference type="Gene3D" id="3.10.450.80">
    <property type="match status" value="1"/>
</dbReference>
<dbReference type="InterPro" id="IPR000552">
    <property type="entry name" value="Ribosomal_eL44"/>
</dbReference>
<dbReference type="InterPro" id="IPR053708">
    <property type="entry name" value="Ribosomal_LSU_eL42"/>
</dbReference>
<dbReference type="InterPro" id="IPR011332">
    <property type="entry name" value="Ribosomal_zn-bd"/>
</dbReference>
<dbReference type="PANTHER" id="PTHR10369">
    <property type="entry name" value="60S RIBOSOMAL PROTEIN L36A/L44"/>
    <property type="match status" value="1"/>
</dbReference>
<dbReference type="Pfam" id="PF00935">
    <property type="entry name" value="Ribosomal_L44"/>
    <property type="match status" value="1"/>
</dbReference>
<dbReference type="SUPFAM" id="SSF57829">
    <property type="entry name" value="Zn-binding ribosomal proteins"/>
    <property type="match status" value="1"/>
</dbReference>
<dbReference type="PROSITE" id="PS01172">
    <property type="entry name" value="RIBOSOMAL_L44E"/>
    <property type="match status" value="1"/>
</dbReference>
<name>RL44_PHARH</name>
<organism>
    <name type="scientific">Phaffia rhodozyma</name>
    <name type="common">Yeast</name>
    <name type="synonym">Xanthophyllomyces dendrorhous</name>
    <dbReference type="NCBI Taxonomy" id="264483"/>
    <lineage>
        <taxon>Eukaryota</taxon>
        <taxon>Fungi</taxon>
        <taxon>Dikarya</taxon>
        <taxon>Basidiomycota</taxon>
        <taxon>Agaricomycotina</taxon>
        <taxon>Tremellomycetes</taxon>
        <taxon>Cystofilobasidiales</taxon>
        <taxon>Mrakiaceae</taxon>
        <taxon>Phaffia</taxon>
    </lineage>
</organism>
<sequence length="106" mass="12200">MVNVPKTRRTYCKGKACKKHTPHKVTQYKKGKDSIFAQGKRRYDRKQSGYGGQTKPVFHKKAKTTKKVVLRLECSVCKYKMQMTLKRCKHFELGGDKKTKGAAISF</sequence>
<keyword id="KW-0046">Antibiotic resistance</keyword>
<keyword id="KW-0196">Cycloheximide resistance</keyword>
<keyword id="KW-0687">Ribonucleoprotein</keyword>
<keyword id="KW-0689">Ribosomal protein</keyword>
<reference key="1">
    <citation type="journal article" date="1998" name="Appl. Environ. Microbiol.">
        <title>Cloning of the ribosomal protein L41 gene of Phaffia rhodozyma and its use a drug resistance marker for transformation.</title>
        <authorList>
            <person name="Kim I.-G."/>
            <person name="Nam S.-K."/>
            <person name="Sohn J.-H."/>
            <person name="Rhee S.-K."/>
            <person name="An G.-H."/>
            <person name="Lee S.-H."/>
            <person name="Choi E.-S."/>
        </authorList>
    </citation>
    <scope>NUCLEOTIDE SEQUENCE [GENOMIC DNA]</scope>
    <source>
        <strain>67-385</strain>
    </source>
</reference>
<protein>
    <recommendedName>
        <fullName evidence="3">Large ribosomal subunit protein eL42</fullName>
    </recommendedName>
    <alternativeName>
        <fullName>60S ribosomal protein L41</fullName>
    </alternativeName>
    <alternativeName>
        <fullName>60S ribosomal protein L44</fullName>
    </alternativeName>
</protein>
<gene>
    <name type="primary">RPL44</name>
    <name type="synonym">RPL41</name>
</gene>